<proteinExistence type="evidence at protein level"/>
<protein>
    <recommendedName>
        <fullName>H-2 class I histocompatibility antigen, Q10 alpha chain</fullName>
    </recommendedName>
</protein>
<sequence>MGAMAPRTLLLLLAAALAPTQTQAGSHSMRYFETSVSRPGLGEPRFIIVGYVDDTQFVRFDSDAETPRMEPRAPWMEQEGPEYWERETQRAKGNEQSFHVSLRTLLGYYNQSESGSHTIQWMYGCKVGSDGRFLRGYLQYAYDGRDYIALNEDLKTWTAADVAAIITRRKWEQAGAAEYYRAYLEAECVEWLLRYLELGKETLLRTDPPKTHVTHHPGSEGDVTLRCWALGFYPADITLTWQLNGEELTQDMELVETRPAGDGTFQKWASVVVPLGKEQNYTCHVYHEGLPEPLTLRWEPPPSTDSIMSHIADLLWPSLKLWWYL</sequence>
<dbReference type="EMBL" id="K01207">
    <property type="protein sequence ID" value="AAA39574.1"/>
    <property type="status" value="ALT_INIT"/>
    <property type="molecule type" value="Genomic_DNA"/>
</dbReference>
<dbReference type="EMBL" id="K01205">
    <property type="protein sequence ID" value="AAA39574.1"/>
    <property type="status" value="JOINED"/>
    <property type="molecule type" value="Genomic_DNA"/>
</dbReference>
<dbReference type="EMBL" id="X16426">
    <property type="protein sequence ID" value="CAA34449.1"/>
    <property type="molecule type" value="Genomic_DNA"/>
</dbReference>
<dbReference type="EMBL" id="AK131620">
    <property type="protein sequence ID" value="BAE20725.1"/>
    <property type="molecule type" value="mRNA"/>
</dbReference>
<dbReference type="EMBL" id="BC011215">
    <property type="protein sequence ID" value="AAH11215.1"/>
    <property type="molecule type" value="mRNA"/>
</dbReference>
<dbReference type="EMBL" id="M12484">
    <property type="protein sequence ID" value="AAA39676.1"/>
    <property type="status" value="ALT_INIT"/>
    <property type="molecule type" value="Genomic_DNA"/>
</dbReference>
<dbReference type="EMBL" id="K00614">
    <property type="protein sequence ID" value="AAA39681.1"/>
    <property type="molecule type" value="mRNA"/>
</dbReference>
<dbReference type="EMBL" id="X16206">
    <property type="protein sequence ID" value="CAA34326.1"/>
    <property type="molecule type" value="Genomic_DNA"/>
</dbReference>
<dbReference type="CCDS" id="CCDS37599.1"/>
<dbReference type="PIR" id="A02199">
    <property type="entry name" value="HLMSTR"/>
</dbReference>
<dbReference type="PIR" id="A21125">
    <property type="entry name" value="A21125"/>
</dbReference>
<dbReference type="PIR" id="S20045">
    <property type="entry name" value="S20045"/>
</dbReference>
<dbReference type="RefSeq" id="NP_034521.1">
    <property type="nucleotide sequence ID" value="NM_010391.4"/>
</dbReference>
<dbReference type="PDB" id="5J6G">
    <property type="method" value="X-ray"/>
    <property type="resolution" value="3.30 A"/>
    <property type="chains" value="A/C=25-280"/>
</dbReference>
<dbReference type="PDB" id="5J6H">
    <property type="method" value="X-ray"/>
    <property type="resolution" value="2.30 A"/>
    <property type="chains" value="A=25-325"/>
</dbReference>
<dbReference type="PDBsum" id="5J6G"/>
<dbReference type="PDBsum" id="5J6H"/>
<dbReference type="SMR" id="P01898"/>
<dbReference type="BioGRID" id="200177">
    <property type="interactions" value="1"/>
</dbReference>
<dbReference type="FunCoup" id="P01898">
    <property type="interactions" value="749"/>
</dbReference>
<dbReference type="STRING" id="10090.ENSMUSP00000134163"/>
<dbReference type="GlyCosmos" id="P01898">
    <property type="glycosylation" value="2 sites, No reported glycans"/>
</dbReference>
<dbReference type="GlyGen" id="P01898">
    <property type="glycosylation" value="2 sites"/>
</dbReference>
<dbReference type="iPTMnet" id="P01898"/>
<dbReference type="PhosphoSitePlus" id="P01898"/>
<dbReference type="CPTAC" id="non-CPTAC-5600"/>
<dbReference type="jPOST" id="P01898"/>
<dbReference type="PaxDb" id="10090-ENSMUSP00000134163"/>
<dbReference type="PeptideAtlas" id="P01898"/>
<dbReference type="ProteomicsDB" id="270920"/>
<dbReference type="DNASU" id="15007"/>
<dbReference type="Ensembl" id="ENSMUST00000068291.7">
    <property type="protein sequence ID" value="ENSMUSP00000066419.7"/>
    <property type="gene ID" value="ENSMUSG00000067235.15"/>
</dbReference>
<dbReference type="Ensembl" id="ENSMUST00000174525.8">
    <property type="protein sequence ID" value="ENSMUSP00000134163.2"/>
    <property type="gene ID" value="ENSMUSG00000067235.15"/>
</dbReference>
<dbReference type="GeneID" id="15007"/>
<dbReference type="KEGG" id="mmu:15007"/>
<dbReference type="UCSC" id="uc008cht.1">
    <property type="organism name" value="mouse"/>
</dbReference>
<dbReference type="AGR" id="MGI:95929"/>
<dbReference type="CTD" id="15007"/>
<dbReference type="MGI" id="MGI:95929">
    <property type="gene designation" value="H2-Q10"/>
</dbReference>
<dbReference type="VEuPathDB" id="HostDB:ENSMUSG00000067235"/>
<dbReference type="eggNOG" id="ENOG502RQEK">
    <property type="taxonomic scope" value="Eukaryota"/>
</dbReference>
<dbReference type="GeneTree" id="ENSGT01120000271826"/>
<dbReference type="HOGENOM" id="CLU_047501_0_1_1"/>
<dbReference type="InParanoid" id="P01898"/>
<dbReference type="OMA" id="DCIEWLH"/>
<dbReference type="OrthoDB" id="8936120at2759"/>
<dbReference type="PhylomeDB" id="P01898"/>
<dbReference type="TreeFam" id="TF336617"/>
<dbReference type="Reactome" id="R-MMU-1236974">
    <property type="pathway name" value="ER-Phagosome pathway"/>
</dbReference>
<dbReference type="Reactome" id="R-MMU-1236977">
    <property type="pathway name" value="Endosomal/Vacuolar pathway"/>
</dbReference>
<dbReference type="Reactome" id="R-MMU-198933">
    <property type="pathway name" value="Immunoregulatory interactions between a Lymphoid and a non-Lymphoid cell"/>
</dbReference>
<dbReference type="Reactome" id="R-MMU-2172127">
    <property type="pathway name" value="DAP12 interactions"/>
</dbReference>
<dbReference type="Reactome" id="R-MMU-6798695">
    <property type="pathway name" value="Neutrophil degranulation"/>
</dbReference>
<dbReference type="Reactome" id="R-MMU-983170">
    <property type="pathway name" value="Antigen Presentation: Folding, assembly and peptide loading of class I MHC"/>
</dbReference>
<dbReference type="BioGRID-ORCS" id="15007">
    <property type="hits" value="2 hits in 80 CRISPR screens"/>
</dbReference>
<dbReference type="ChiTaRS" id="H2-Q10">
    <property type="organism name" value="mouse"/>
</dbReference>
<dbReference type="PRO" id="PR:P01898"/>
<dbReference type="Proteomes" id="UP000000589">
    <property type="component" value="Chromosome 17"/>
</dbReference>
<dbReference type="RNAct" id="P01898">
    <property type="molecule type" value="protein"/>
</dbReference>
<dbReference type="Bgee" id="ENSMUSG00000067235">
    <property type="expression patterns" value="Expressed in left lobe of liver and 97 other cell types or tissues"/>
</dbReference>
<dbReference type="GO" id="GO:0005615">
    <property type="term" value="C:extracellular space"/>
    <property type="evidence" value="ECO:0000314"/>
    <property type="project" value="MGI"/>
</dbReference>
<dbReference type="GO" id="GO:0098553">
    <property type="term" value="C:lumenal side of endoplasmic reticulum membrane"/>
    <property type="evidence" value="ECO:0000304"/>
    <property type="project" value="Reactome"/>
</dbReference>
<dbReference type="GO" id="GO:0042612">
    <property type="term" value="C:MHC class I protein complex"/>
    <property type="evidence" value="ECO:0007669"/>
    <property type="project" value="UniProtKB-KW"/>
</dbReference>
<dbReference type="GO" id="GO:0030670">
    <property type="term" value="C:phagocytic vesicle membrane"/>
    <property type="evidence" value="ECO:0000304"/>
    <property type="project" value="Reactome"/>
</dbReference>
<dbReference type="GO" id="GO:0002474">
    <property type="term" value="P:antigen processing and presentation of peptide antigen via MHC class I"/>
    <property type="evidence" value="ECO:0007669"/>
    <property type="project" value="UniProtKB-KW"/>
</dbReference>
<dbReference type="FunFam" id="2.60.40.10:FF:000014">
    <property type="entry name" value="H-2 class I histocompatibility antigen, alpha chain"/>
    <property type="match status" value="1"/>
</dbReference>
<dbReference type="FunFam" id="3.30.500.10:FF:000001">
    <property type="entry name" value="H-2 class I histocompatibility antigen, alpha chain"/>
    <property type="match status" value="1"/>
</dbReference>
<dbReference type="Gene3D" id="2.60.40.10">
    <property type="entry name" value="Immunoglobulins"/>
    <property type="match status" value="1"/>
</dbReference>
<dbReference type="Gene3D" id="3.30.500.10">
    <property type="entry name" value="MHC class I-like antigen recognition-like"/>
    <property type="match status" value="1"/>
</dbReference>
<dbReference type="InterPro" id="IPR007110">
    <property type="entry name" value="Ig-like_dom"/>
</dbReference>
<dbReference type="InterPro" id="IPR036179">
    <property type="entry name" value="Ig-like_dom_sf"/>
</dbReference>
<dbReference type="InterPro" id="IPR013783">
    <property type="entry name" value="Ig-like_fold"/>
</dbReference>
<dbReference type="InterPro" id="IPR003006">
    <property type="entry name" value="Ig/MHC_CS"/>
</dbReference>
<dbReference type="InterPro" id="IPR003597">
    <property type="entry name" value="Ig_C1-set"/>
</dbReference>
<dbReference type="InterPro" id="IPR050208">
    <property type="entry name" value="MHC_class-I_related"/>
</dbReference>
<dbReference type="InterPro" id="IPR011161">
    <property type="entry name" value="MHC_I-like_Ag-recog"/>
</dbReference>
<dbReference type="InterPro" id="IPR037055">
    <property type="entry name" value="MHC_I-like_Ag-recog_sf"/>
</dbReference>
<dbReference type="InterPro" id="IPR011162">
    <property type="entry name" value="MHC_I/II-like_Ag-recog"/>
</dbReference>
<dbReference type="InterPro" id="IPR001039">
    <property type="entry name" value="MHC_I_a_a1/a2"/>
</dbReference>
<dbReference type="PANTHER" id="PTHR16675:SF251">
    <property type="entry name" value="HLA CLASS I HISTOCOMPATIBILITY ANTIGEN, C ALPHA CHAIN"/>
    <property type="match status" value="1"/>
</dbReference>
<dbReference type="PANTHER" id="PTHR16675">
    <property type="entry name" value="MHC CLASS I-RELATED"/>
    <property type="match status" value="1"/>
</dbReference>
<dbReference type="Pfam" id="PF07654">
    <property type="entry name" value="C1-set"/>
    <property type="match status" value="1"/>
</dbReference>
<dbReference type="Pfam" id="PF00129">
    <property type="entry name" value="MHC_I"/>
    <property type="match status" value="1"/>
</dbReference>
<dbReference type="PRINTS" id="PR01638">
    <property type="entry name" value="MHCCLASSI"/>
</dbReference>
<dbReference type="SMART" id="SM00407">
    <property type="entry name" value="IGc1"/>
    <property type="match status" value="1"/>
</dbReference>
<dbReference type="SUPFAM" id="SSF48726">
    <property type="entry name" value="Immunoglobulin"/>
    <property type="match status" value="1"/>
</dbReference>
<dbReference type="SUPFAM" id="SSF54452">
    <property type="entry name" value="MHC antigen-recognition domain"/>
    <property type="match status" value="1"/>
</dbReference>
<dbReference type="PROSITE" id="PS50835">
    <property type="entry name" value="IG_LIKE"/>
    <property type="match status" value="1"/>
</dbReference>
<dbReference type="PROSITE" id="PS00290">
    <property type="entry name" value="IG_MHC"/>
    <property type="match status" value="1"/>
</dbReference>
<organism>
    <name type="scientific">Mus musculus</name>
    <name type="common">Mouse</name>
    <dbReference type="NCBI Taxonomy" id="10090"/>
    <lineage>
        <taxon>Eukaryota</taxon>
        <taxon>Metazoa</taxon>
        <taxon>Chordata</taxon>
        <taxon>Craniata</taxon>
        <taxon>Vertebrata</taxon>
        <taxon>Euteleostomi</taxon>
        <taxon>Mammalia</taxon>
        <taxon>Eutheria</taxon>
        <taxon>Euarchontoglires</taxon>
        <taxon>Glires</taxon>
        <taxon>Rodentia</taxon>
        <taxon>Myomorpha</taxon>
        <taxon>Muroidea</taxon>
        <taxon>Muridae</taxon>
        <taxon>Murinae</taxon>
        <taxon>Mus</taxon>
        <taxon>Mus</taxon>
    </lineage>
</organism>
<comment type="function">
    <text>Involved in the presentation of foreign antigens to the immune system.</text>
</comment>
<comment type="subunit">
    <text>Heterodimer of an alpha chain and a beta chain (beta-2-microglobulin).</text>
</comment>
<comment type="subcellular location">
    <subcellularLocation>
        <location>Membrane</location>
        <topology>Single-pass type I membrane protein</topology>
    </subcellularLocation>
</comment>
<comment type="similarity">
    <text evidence="4">Belongs to the MHC class I family.</text>
</comment>
<comment type="sequence caution" evidence="4">
    <conflict type="erroneous initiation">
        <sequence resource="EMBL-CDS" id="AAA39574"/>
    </conflict>
</comment>
<comment type="sequence caution" evidence="4">
    <conflict type="erroneous initiation">
        <sequence resource="EMBL-CDS" id="AAA39676"/>
    </conflict>
</comment>
<gene>
    <name type="primary">H2-Q10</name>
</gene>
<name>HA10_MOUSE</name>
<keyword id="KW-0002">3D-structure</keyword>
<keyword id="KW-1015">Disulfide bond</keyword>
<keyword id="KW-0325">Glycoprotein</keyword>
<keyword id="KW-0391">Immunity</keyword>
<keyword id="KW-0472">Membrane</keyword>
<keyword id="KW-0490">MHC I</keyword>
<keyword id="KW-1185">Reference proteome</keyword>
<keyword id="KW-0732">Signal</keyword>
<keyword id="KW-0812">Transmembrane</keyword>
<keyword id="KW-1133">Transmembrane helix</keyword>
<accession>P01898</accession>
<accession>O19475</accession>
<accession>Q31214</accession>
<accession>Q95HC3</accession>
<feature type="signal peptide" evidence="1">
    <location>
        <begin position="1"/>
        <end position="24"/>
    </location>
</feature>
<feature type="chain" id="PRO_0000018936" description="H-2 class I histocompatibility antigen, Q10 alpha chain">
    <location>
        <begin position="25"/>
        <end position="325"/>
    </location>
</feature>
<feature type="topological domain" description="Extracellular" evidence="1">
    <location>
        <begin position="25"/>
        <end position="310"/>
    </location>
</feature>
<feature type="transmembrane region" description="Helical" evidence="1">
    <location>
        <begin position="311"/>
        <end position="324"/>
    </location>
</feature>
<feature type="domain" description="Ig-like C1-type">
    <location>
        <begin position="209"/>
        <end position="297"/>
    </location>
</feature>
<feature type="region of interest" description="Alpha-1">
    <location>
        <begin position="25"/>
        <end position="114"/>
    </location>
</feature>
<feature type="region of interest" description="Alpha-2">
    <location>
        <begin position="115"/>
        <end position="206"/>
    </location>
</feature>
<feature type="region of interest" description="Alpha-3">
    <location>
        <begin position="207"/>
        <end position="298"/>
    </location>
</feature>
<feature type="region of interest" description="Connecting peptide">
    <location>
        <begin position="299"/>
        <end position="310"/>
    </location>
</feature>
<feature type="glycosylation site" description="N-linked (GlcNAc...) asparagine" evidence="3">
    <location>
        <position position="110"/>
    </location>
</feature>
<feature type="glycosylation site" description="N-linked (GlcNAc...) asparagine" evidence="3">
    <location>
        <position position="280"/>
    </location>
</feature>
<feature type="disulfide bond" evidence="2">
    <location>
        <begin position="125"/>
        <end position="188"/>
    </location>
</feature>
<feature type="disulfide bond" evidence="2">
    <location>
        <begin position="227"/>
        <end position="283"/>
    </location>
</feature>
<feature type="sequence conflict" description="In Ref. 4; AAH11215." evidence="4" ref="4">
    <original>H</original>
    <variation>R</variation>
    <location>
        <position position="99"/>
    </location>
</feature>
<feature type="sequence conflict" description="In Ref. 1; AAA39574." evidence="4" ref="1">
    <original>Y</original>
    <variation>H</variation>
    <location>
        <position position="108"/>
    </location>
</feature>
<feature type="strand" evidence="6">
    <location>
        <begin position="27"/>
        <end position="36"/>
    </location>
</feature>
<feature type="turn" evidence="6">
    <location>
        <begin position="39"/>
        <end position="41"/>
    </location>
</feature>
<feature type="strand" evidence="6">
    <location>
        <begin position="45"/>
        <end position="52"/>
    </location>
</feature>
<feature type="strand" evidence="6">
    <location>
        <begin position="55"/>
        <end position="61"/>
    </location>
</feature>
<feature type="strand" evidence="6">
    <location>
        <begin position="64"/>
        <end position="66"/>
    </location>
</feature>
<feature type="strand" evidence="6">
    <location>
        <begin position="70"/>
        <end position="73"/>
    </location>
</feature>
<feature type="turn" evidence="6">
    <location>
        <begin position="74"/>
        <end position="78"/>
    </location>
</feature>
<feature type="helix" evidence="6">
    <location>
        <begin position="81"/>
        <end position="108"/>
    </location>
</feature>
<feature type="strand" evidence="6">
    <location>
        <begin position="118"/>
        <end position="127"/>
    </location>
</feature>
<feature type="strand" evidence="6">
    <location>
        <begin position="133"/>
        <end position="142"/>
    </location>
</feature>
<feature type="strand" evidence="6">
    <location>
        <begin position="145"/>
        <end position="150"/>
    </location>
</feature>
<feature type="strand" evidence="6">
    <location>
        <begin position="157"/>
        <end position="159"/>
    </location>
</feature>
<feature type="helix" evidence="6">
    <location>
        <begin position="162"/>
        <end position="173"/>
    </location>
</feature>
<feature type="helix" evidence="6">
    <location>
        <begin position="176"/>
        <end position="185"/>
    </location>
</feature>
<feature type="helix" evidence="6">
    <location>
        <begin position="187"/>
        <end position="198"/>
    </location>
</feature>
<feature type="helix" evidence="6">
    <location>
        <begin position="200"/>
        <end position="203"/>
    </location>
</feature>
<feature type="strand" evidence="6">
    <location>
        <begin position="210"/>
        <end position="218"/>
    </location>
</feature>
<feature type="strand" evidence="6">
    <location>
        <begin position="222"/>
        <end position="235"/>
    </location>
</feature>
<feature type="strand" evidence="6">
    <location>
        <begin position="238"/>
        <end position="243"/>
    </location>
</feature>
<feature type="strand" evidence="5">
    <location>
        <begin position="246"/>
        <end position="248"/>
    </location>
</feature>
<feature type="strand" evidence="6">
    <location>
        <begin position="261"/>
        <end position="263"/>
    </location>
</feature>
<feature type="strand" evidence="6">
    <location>
        <begin position="265"/>
        <end position="274"/>
    </location>
</feature>
<feature type="helix" evidence="6">
    <location>
        <begin position="278"/>
        <end position="280"/>
    </location>
</feature>
<feature type="strand" evidence="6">
    <location>
        <begin position="281"/>
        <end position="286"/>
    </location>
</feature>
<feature type="strand" evidence="6">
    <location>
        <begin position="294"/>
        <end position="296"/>
    </location>
</feature>
<evidence type="ECO:0000255" key="1"/>
<evidence type="ECO:0000255" key="2">
    <source>
        <dbReference type="PROSITE-ProRule" id="PRU00114"/>
    </source>
</evidence>
<evidence type="ECO:0000269" key="3">
    <source>
    </source>
</evidence>
<evidence type="ECO:0000305" key="4"/>
<evidence type="ECO:0007829" key="5">
    <source>
        <dbReference type="PDB" id="5J6G"/>
    </source>
</evidence>
<evidence type="ECO:0007829" key="6">
    <source>
        <dbReference type="PDB" id="5J6H"/>
    </source>
</evidence>
<reference key="1">
    <citation type="journal article" date="1984" name="Cell">
        <title>A nonpolymorphic class I gene in the murine major histocompatibility complex.</title>
        <authorList>
            <person name="Mellor A.L."/>
            <person name="Weiss E.H."/>
            <person name="Kress M."/>
            <person name="Jay G."/>
            <person name="Flavell R.A."/>
        </authorList>
    </citation>
    <scope>NUCLEOTIDE SEQUENCE [GENOMIC DNA]</scope>
</reference>
<reference key="2">
    <citation type="journal article" date="1989" name="EMBO J.">
        <title>Organization and structure of the Qa genes of the major histocompatibility complex of the C3H mouse: implications for Qa function and class I evolution.</title>
        <authorList>
            <person name="Watts S."/>
            <person name="Davis A.C."/>
            <person name="Gaut B."/>
            <person name="Wheeler C."/>
            <person name="Hill L."/>
            <person name="Goodenow R.S."/>
        </authorList>
    </citation>
    <scope>NUCLEOTIDE SEQUENCE [GENOMIC DNA]</scope>
    <source>
        <strain>C3H/HeJ</strain>
    </source>
</reference>
<reference key="3">
    <citation type="journal article" date="2005" name="Science">
        <title>The transcriptional landscape of the mammalian genome.</title>
        <authorList>
            <person name="Carninci P."/>
            <person name="Kasukawa T."/>
            <person name="Katayama S."/>
            <person name="Gough J."/>
            <person name="Frith M.C."/>
            <person name="Maeda N."/>
            <person name="Oyama R."/>
            <person name="Ravasi T."/>
            <person name="Lenhard B."/>
            <person name="Wells C."/>
            <person name="Kodzius R."/>
            <person name="Shimokawa K."/>
            <person name="Bajic V.B."/>
            <person name="Brenner S.E."/>
            <person name="Batalov S."/>
            <person name="Forrest A.R."/>
            <person name="Zavolan M."/>
            <person name="Davis M.J."/>
            <person name="Wilming L.G."/>
            <person name="Aidinis V."/>
            <person name="Allen J.E."/>
            <person name="Ambesi-Impiombato A."/>
            <person name="Apweiler R."/>
            <person name="Aturaliya R.N."/>
            <person name="Bailey T.L."/>
            <person name="Bansal M."/>
            <person name="Baxter L."/>
            <person name="Beisel K.W."/>
            <person name="Bersano T."/>
            <person name="Bono H."/>
            <person name="Chalk A.M."/>
            <person name="Chiu K.P."/>
            <person name="Choudhary V."/>
            <person name="Christoffels A."/>
            <person name="Clutterbuck D.R."/>
            <person name="Crowe M.L."/>
            <person name="Dalla E."/>
            <person name="Dalrymple B.P."/>
            <person name="de Bono B."/>
            <person name="Della Gatta G."/>
            <person name="di Bernardo D."/>
            <person name="Down T."/>
            <person name="Engstrom P."/>
            <person name="Fagiolini M."/>
            <person name="Faulkner G."/>
            <person name="Fletcher C.F."/>
            <person name="Fukushima T."/>
            <person name="Furuno M."/>
            <person name="Futaki S."/>
            <person name="Gariboldi M."/>
            <person name="Georgii-Hemming P."/>
            <person name="Gingeras T.R."/>
            <person name="Gojobori T."/>
            <person name="Green R.E."/>
            <person name="Gustincich S."/>
            <person name="Harbers M."/>
            <person name="Hayashi Y."/>
            <person name="Hensch T.K."/>
            <person name="Hirokawa N."/>
            <person name="Hill D."/>
            <person name="Huminiecki L."/>
            <person name="Iacono M."/>
            <person name="Ikeo K."/>
            <person name="Iwama A."/>
            <person name="Ishikawa T."/>
            <person name="Jakt M."/>
            <person name="Kanapin A."/>
            <person name="Katoh M."/>
            <person name="Kawasawa Y."/>
            <person name="Kelso J."/>
            <person name="Kitamura H."/>
            <person name="Kitano H."/>
            <person name="Kollias G."/>
            <person name="Krishnan S.P."/>
            <person name="Kruger A."/>
            <person name="Kummerfeld S.K."/>
            <person name="Kurochkin I.V."/>
            <person name="Lareau L.F."/>
            <person name="Lazarevic D."/>
            <person name="Lipovich L."/>
            <person name="Liu J."/>
            <person name="Liuni S."/>
            <person name="McWilliam S."/>
            <person name="Madan Babu M."/>
            <person name="Madera M."/>
            <person name="Marchionni L."/>
            <person name="Matsuda H."/>
            <person name="Matsuzawa S."/>
            <person name="Miki H."/>
            <person name="Mignone F."/>
            <person name="Miyake S."/>
            <person name="Morris K."/>
            <person name="Mottagui-Tabar S."/>
            <person name="Mulder N."/>
            <person name="Nakano N."/>
            <person name="Nakauchi H."/>
            <person name="Ng P."/>
            <person name="Nilsson R."/>
            <person name="Nishiguchi S."/>
            <person name="Nishikawa S."/>
            <person name="Nori F."/>
            <person name="Ohara O."/>
            <person name="Okazaki Y."/>
            <person name="Orlando V."/>
            <person name="Pang K.C."/>
            <person name="Pavan W.J."/>
            <person name="Pavesi G."/>
            <person name="Pesole G."/>
            <person name="Petrovsky N."/>
            <person name="Piazza S."/>
            <person name="Reed J."/>
            <person name="Reid J.F."/>
            <person name="Ring B.Z."/>
            <person name="Ringwald M."/>
            <person name="Rost B."/>
            <person name="Ruan Y."/>
            <person name="Salzberg S.L."/>
            <person name="Sandelin A."/>
            <person name="Schneider C."/>
            <person name="Schoenbach C."/>
            <person name="Sekiguchi K."/>
            <person name="Semple C.A."/>
            <person name="Seno S."/>
            <person name="Sessa L."/>
            <person name="Sheng Y."/>
            <person name="Shibata Y."/>
            <person name="Shimada H."/>
            <person name="Shimada K."/>
            <person name="Silva D."/>
            <person name="Sinclair B."/>
            <person name="Sperling S."/>
            <person name="Stupka E."/>
            <person name="Sugiura K."/>
            <person name="Sultana R."/>
            <person name="Takenaka Y."/>
            <person name="Taki K."/>
            <person name="Tammoja K."/>
            <person name="Tan S.L."/>
            <person name="Tang S."/>
            <person name="Taylor M.S."/>
            <person name="Tegner J."/>
            <person name="Teichmann S.A."/>
            <person name="Ueda H.R."/>
            <person name="van Nimwegen E."/>
            <person name="Verardo R."/>
            <person name="Wei C.L."/>
            <person name="Yagi K."/>
            <person name="Yamanishi H."/>
            <person name="Zabarovsky E."/>
            <person name="Zhu S."/>
            <person name="Zimmer A."/>
            <person name="Hide W."/>
            <person name="Bult C."/>
            <person name="Grimmond S.M."/>
            <person name="Teasdale R.D."/>
            <person name="Liu E.T."/>
            <person name="Brusic V."/>
            <person name="Quackenbush J."/>
            <person name="Wahlestedt C."/>
            <person name="Mattick J.S."/>
            <person name="Hume D.A."/>
            <person name="Kai C."/>
            <person name="Sasaki D."/>
            <person name="Tomaru Y."/>
            <person name="Fukuda S."/>
            <person name="Kanamori-Katayama M."/>
            <person name="Suzuki M."/>
            <person name="Aoki J."/>
            <person name="Arakawa T."/>
            <person name="Iida J."/>
            <person name="Imamura K."/>
            <person name="Itoh M."/>
            <person name="Kato T."/>
            <person name="Kawaji H."/>
            <person name="Kawagashira N."/>
            <person name="Kawashima T."/>
            <person name="Kojima M."/>
            <person name="Kondo S."/>
            <person name="Konno H."/>
            <person name="Nakano K."/>
            <person name="Ninomiya N."/>
            <person name="Nishio T."/>
            <person name="Okada M."/>
            <person name="Plessy C."/>
            <person name="Shibata K."/>
            <person name="Shiraki T."/>
            <person name="Suzuki S."/>
            <person name="Tagami M."/>
            <person name="Waki K."/>
            <person name="Watahiki A."/>
            <person name="Okamura-Oho Y."/>
            <person name="Suzuki H."/>
            <person name="Kawai J."/>
            <person name="Hayashizaki Y."/>
        </authorList>
    </citation>
    <scope>NUCLEOTIDE SEQUENCE [LARGE SCALE MRNA]</scope>
    <source>
        <strain>C57BL/6J</strain>
        <tissue>Liver</tissue>
    </source>
</reference>
<reference key="4">
    <citation type="journal article" date="2004" name="Genome Res.">
        <title>The status, quality, and expansion of the NIH full-length cDNA project: the Mammalian Gene Collection (MGC).</title>
        <authorList>
            <consortium name="The MGC Project Team"/>
        </authorList>
    </citation>
    <scope>NUCLEOTIDE SEQUENCE [LARGE SCALE MRNA]</scope>
    <source>
        <strain>FVB/N</strain>
        <tissue>Liver</tissue>
    </source>
</reference>
<reference key="5">
    <citation type="journal article" date="1986" name="Cell">
        <title>Detailed analysis of the mouse H-2Kb promoter: enhancer-like sequences and their role in the regulation of class I gene expression.</title>
        <authorList>
            <person name="Kimura A."/>
            <person name="Israel A."/>
            <person name="le Bail O."/>
            <person name="Kourilsky P."/>
        </authorList>
    </citation>
    <scope>NUCLEOTIDE SEQUENCE [GENOMIC DNA] OF 1-9</scope>
</reference>
<reference key="6">
    <citation type="journal article" date="1983" name="Cell">
        <title>Secretion of a transplantation-related antigen.</title>
        <authorList>
            <person name="Kress M."/>
            <person name="Cosman D."/>
            <person name="Khoury G."/>
            <person name="Jay G."/>
        </authorList>
    </citation>
    <scope>NUCLEOTIDE SEQUENCE [MRNA] OF 85-325 (CLONE PH16)</scope>
</reference>
<reference key="7">
    <citation type="journal article" date="1989" name="J. Exp. Med.">
        <title>Comparison of exon 5 sequences from 35 class I genes of the BALB/c mouse.</title>
        <authorList>
            <person name="Brorson K.A."/>
            <person name="Hunt S.W. III"/>
            <person name="Hunkapiller T."/>
            <person name="Sun Y.H."/>
            <person name="Cheroutre H."/>
            <person name="Nickerson D.A."/>
            <person name="Hood L."/>
        </authorList>
    </citation>
    <scope>NUCLEOTIDE SEQUENCE [GENOMIC DNA] OF 300-325</scope>
</reference>
<reference key="8">
    <citation type="journal article" date="2007" name="J. Proteome Res.">
        <title>Enhanced analysis of the mouse plasma proteome using cysteine-containing tryptic glycopeptides.</title>
        <authorList>
            <person name="Bernhard O.K."/>
            <person name="Kapp E.A."/>
            <person name="Simpson R.J."/>
        </authorList>
    </citation>
    <scope>GLYCOSYLATION [LARGE SCALE ANALYSIS] AT ASN-110 AND ASN-280</scope>
    <source>
        <strain>C57BL/6J</strain>
        <tissue>Plasma</tissue>
    </source>
</reference>
<reference key="9">
    <citation type="journal article" date="2010" name="Cell">
        <title>A tissue-specific atlas of mouse protein phosphorylation and expression.</title>
        <authorList>
            <person name="Huttlin E.L."/>
            <person name="Jedrychowski M.P."/>
            <person name="Elias J.E."/>
            <person name="Goswami T."/>
            <person name="Rad R."/>
            <person name="Beausoleil S.A."/>
            <person name="Villen J."/>
            <person name="Haas W."/>
            <person name="Sowa M.E."/>
            <person name="Gygi S.P."/>
        </authorList>
    </citation>
    <scope>IDENTIFICATION BY MASS SPECTROMETRY [LARGE SCALE ANALYSIS]</scope>
    <source>
        <tissue>Brown adipose tissue</tissue>
        <tissue>Heart</tissue>
        <tissue>Kidney</tissue>
        <tissue>Liver</tissue>
        <tissue>Lung</tissue>
        <tissue>Pancreas</tissue>
    </source>
</reference>